<sequence length="290" mass="32724">MRIADYSVTKAVLDRHGFTFKKSFGQNFLTDTNILQKIVDTAEIDQNVNVIEIGPGIGALTEFLAENAAEVMAFEIDDRLVPILADTLRDFDNVQVVNQDILKADLQTQIKQFKNPDLPIKVVANLPYYITTPILMHLIESKIPFQEFVVMMQREVADRISAEPNTKAYGSLSIAVQYYMTAKVAFIVPRTVFVPAPNVDSAILKMMRRDQPLIEVKDEDFFFRVSRLSFVHRRKTLWNNLTSHFGKSEDIKAKLEKGLALADIKSSIRGEALSIQDFGKLADALKEVGL</sequence>
<name>RSMA_STRP3</name>
<feature type="chain" id="PRO_0000101619" description="Ribosomal RNA small subunit methyltransferase A">
    <location>
        <begin position="1"/>
        <end position="290"/>
    </location>
</feature>
<feature type="binding site" evidence="1">
    <location>
        <position position="27"/>
    </location>
    <ligand>
        <name>S-adenosyl-L-methionine</name>
        <dbReference type="ChEBI" id="CHEBI:59789"/>
    </ligand>
</feature>
<feature type="binding site" evidence="1">
    <location>
        <position position="29"/>
    </location>
    <ligand>
        <name>S-adenosyl-L-methionine</name>
        <dbReference type="ChEBI" id="CHEBI:59789"/>
    </ligand>
</feature>
<feature type="binding site" evidence="1">
    <location>
        <position position="54"/>
    </location>
    <ligand>
        <name>S-adenosyl-L-methionine</name>
        <dbReference type="ChEBI" id="CHEBI:59789"/>
    </ligand>
</feature>
<feature type="binding site" evidence="1">
    <location>
        <position position="75"/>
    </location>
    <ligand>
        <name>S-adenosyl-L-methionine</name>
        <dbReference type="ChEBI" id="CHEBI:59789"/>
    </ligand>
</feature>
<feature type="binding site" evidence="1">
    <location>
        <position position="100"/>
    </location>
    <ligand>
        <name>S-adenosyl-L-methionine</name>
        <dbReference type="ChEBI" id="CHEBI:59789"/>
    </ligand>
</feature>
<feature type="binding site" evidence="1">
    <location>
        <position position="125"/>
    </location>
    <ligand>
        <name>S-adenosyl-L-methionine</name>
        <dbReference type="ChEBI" id="CHEBI:59789"/>
    </ligand>
</feature>
<dbReference type="EC" id="2.1.1.182" evidence="1"/>
<dbReference type="EMBL" id="AE014074">
    <property type="protein sequence ID" value="AAM78797.1"/>
    <property type="molecule type" value="Genomic_DNA"/>
</dbReference>
<dbReference type="RefSeq" id="WP_011054173.1">
    <property type="nucleotide sequence ID" value="NC_004070.1"/>
</dbReference>
<dbReference type="SMR" id="P0DF12"/>
<dbReference type="KEGG" id="spg:SpyM3_0190"/>
<dbReference type="HOGENOM" id="CLU_041220_0_0_9"/>
<dbReference type="Proteomes" id="UP000000564">
    <property type="component" value="Chromosome"/>
</dbReference>
<dbReference type="GO" id="GO:0005829">
    <property type="term" value="C:cytosol"/>
    <property type="evidence" value="ECO:0007669"/>
    <property type="project" value="TreeGrafter"/>
</dbReference>
<dbReference type="GO" id="GO:0052908">
    <property type="term" value="F:16S rRNA (adenine(1518)-N(6)/adenine(1519)-N(6))-dimethyltransferase activity"/>
    <property type="evidence" value="ECO:0007669"/>
    <property type="project" value="UniProtKB-EC"/>
</dbReference>
<dbReference type="GO" id="GO:0003723">
    <property type="term" value="F:RNA binding"/>
    <property type="evidence" value="ECO:0007669"/>
    <property type="project" value="UniProtKB-KW"/>
</dbReference>
<dbReference type="CDD" id="cd02440">
    <property type="entry name" value="AdoMet_MTases"/>
    <property type="match status" value="1"/>
</dbReference>
<dbReference type="FunFam" id="3.40.50.150:FF:000023">
    <property type="entry name" value="Ribosomal RNA small subunit methyltransferase A"/>
    <property type="match status" value="1"/>
</dbReference>
<dbReference type="Gene3D" id="1.10.8.100">
    <property type="entry name" value="Ribosomal RNA adenine dimethylase-like, domain 2"/>
    <property type="match status" value="1"/>
</dbReference>
<dbReference type="Gene3D" id="3.40.50.150">
    <property type="entry name" value="Vaccinia Virus protein VP39"/>
    <property type="match status" value="1"/>
</dbReference>
<dbReference type="HAMAP" id="MF_00607">
    <property type="entry name" value="16SrRNA_methyltr_A"/>
    <property type="match status" value="1"/>
</dbReference>
<dbReference type="InterPro" id="IPR001737">
    <property type="entry name" value="KsgA/Erm"/>
</dbReference>
<dbReference type="InterPro" id="IPR023165">
    <property type="entry name" value="rRNA_Ade_diMease-like_C"/>
</dbReference>
<dbReference type="InterPro" id="IPR020596">
    <property type="entry name" value="rRNA_Ade_Mease_Trfase_CS"/>
</dbReference>
<dbReference type="InterPro" id="IPR020598">
    <property type="entry name" value="rRNA_Ade_methylase_Trfase_N"/>
</dbReference>
<dbReference type="InterPro" id="IPR011530">
    <property type="entry name" value="rRNA_adenine_dimethylase"/>
</dbReference>
<dbReference type="InterPro" id="IPR029063">
    <property type="entry name" value="SAM-dependent_MTases_sf"/>
</dbReference>
<dbReference type="NCBIfam" id="TIGR00755">
    <property type="entry name" value="ksgA"/>
    <property type="match status" value="1"/>
</dbReference>
<dbReference type="PANTHER" id="PTHR11727">
    <property type="entry name" value="DIMETHYLADENOSINE TRANSFERASE"/>
    <property type="match status" value="1"/>
</dbReference>
<dbReference type="PANTHER" id="PTHR11727:SF7">
    <property type="entry name" value="DIMETHYLADENOSINE TRANSFERASE-RELATED"/>
    <property type="match status" value="1"/>
</dbReference>
<dbReference type="Pfam" id="PF00398">
    <property type="entry name" value="RrnaAD"/>
    <property type="match status" value="1"/>
</dbReference>
<dbReference type="SMART" id="SM00650">
    <property type="entry name" value="rADc"/>
    <property type="match status" value="1"/>
</dbReference>
<dbReference type="SUPFAM" id="SSF53335">
    <property type="entry name" value="S-adenosyl-L-methionine-dependent methyltransferases"/>
    <property type="match status" value="1"/>
</dbReference>
<dbReference type="PROSITE" id="PS01131">
    <property type="entry name" value="RRNA_A_DIMETH"/>
    <property type="match status" value="1"/>
</dbReference>
<dbReference type="PROSITE" id="PS51689">
    <property type="entry name" value="SAM_RNA_A_N6_MT"/>
    <property type="match status" value="1"/>
</dbReference>
<evidence type="ECO:0000255" key="1">
    <source>
        <dbReference type="HAMAP-Rule" id="MF_00607"/>
    </source>
</evidence>
<protein>
    <recommendedName>
        <fullName evidence="1">Ribosomal RNA small subunit methyltransferase A</fullName>
        <ecNumber evidence="1">2.1.1.182</ecNumber>
    </recommendedName>
    <alternativeName>
        <fullName evidence="1">16S rRNA (adenine(1518)-N(6)/adenine(1519)-N(6))-dimethyltransferase</fullName>
    </alternativeName>
    <alternativeName>
        <fullName evidence="1">16S rRNA dimethyladenosine transferase</fullName>
    </alternativeName>
    <alternativeName>
        <fullName evidence="1">16S rRNA dimethylase</fullName>
    </alternativeName>
    <alternativeName>
        <fullName evidence="1">S-adenosylmethionine-6-N', N'-adenosyl(rRNA) dimethyltransferase</fullName>
    </alternativeName>
</protein>
<keyword id="KW-0963">Cytoplasm</keyword>
<keyword id="KW-0489">Methyltransferase</keyword>
<keyword id="KW-0694">RNA-binding</keyword>
<keyword id="KW-0698">rRNA processing</keyword>
<keyword id="KW-0949">S-adenosyl-L-methionine</keyword>
<keyword id="KW-0808">Transferase</keyword>
<organism>
    <name type="scientific">Streptococcus pyogenes serotype M3 (strain ATCC BAA-595 / MGAS315)</name>
    <dbReference type="NCBI Taxonomy" id="198466"/>
    <lineage>
        <taxon>Bacteria</taxon>
        <taxon>Bacillati</taxon>
        <taxon>Bacillota</taxon>
        <taxon>Bacilli</taxon>
        <taxon>Lactobacillales</taxon>
        <taxon>Streptococcaceae</taxon>
        <taxon>Streptococcus</taxon>
    </lineage>
</organism>
<accession>P0DF12</accession>
<accession>Q8K8N6</accession>
<proteinExistence type="inferred from homology"/>
<comment type="function">
    <text evidence="1">Specifically dimethylates two adjacent adenosines (A1518 and A1519) in the loop of a conserved hairpin near the 3'-end of 16S rRNA in the 30S particle. May play a critical role in biogenesis of 30S subunits.</text>
</comment>
<comment type="catalytic activity">
    <reaction evidence="1">
        <text>adenosine(1518)/adenosine(1519) in 16S rRNA + 4 S-adenosyl-L-methionine = N(6)-dimethyladenosine(1518)/N(6)-dimethyladenosine(1519) in 16S rRNA + 4 S-adenosyl-L-homocysteine + 4 H(+)</text>
        <dbReference type="Rhea" id="RHEA:19609"/>
        <dbReference type="Rhea" id="RHEA-COMP:10232"/>
        <dbReference type="Rhea" id="RHEA-COMP:10233"/>
        <dbReference type="ChEBI" id="CHEBI:15378"/>
        <dbReference type="ChEBI" id="CHEBI:57856"/>
        <dbReference type="ChEBI" id="CHEBI:59789"/>
        <dbReference type="ChEBI" id="CHEBI:74411"/>
        <dbReference type="ChEBI" id="CHEBI:74493"/>
        <dbReference type="EC" id="2.1.1.182"/>
    </reaction>
</comment>
<comment type="subcellular location">
    <subcellularLocation>
        <location evidence="1">Cytoplasm</location>
    </subcellularLocation>
</comment>
<comment type="similarity">
    <text evidence="1">Belongs to the class I-like SAM-binding methyltransferase superfamily. rRNA adenine N(6)-methyltransferase family. RsmA subfamily.</text>
</comment>
<gene>
    <name evidence="1" type="primary">rsmA</name>
    <name evidence="1" type="synonym">ksgA</name>
    <name type="ordered locus">SpyM3_0190</name>
</gene>
<reference key="1">
    <citation type="journal article" date="2002" name="Proc. Natl. Acad. Sci. U.S.A.">
        <title>Genome sequence of a serotype M3 strain of group A Streptococcus: phage-encoded toxins, the high-virulence phenotype, and clone emergence.</title>
        <authorList>
            <person name="Beres S.B."/>
            <person name="Sylva G.L."/>
            <person name="Barbian K.D."/>
            <person name="Lei B."/>
            <person name="Hoff J.S."/>
            <person name="Mammarella N.D."/>
            <person name="Liu M.-Y."/>
            <person name="Smoot J.C."/>
            <person name="Porcella S.F."/>
            <person name="Parkins L.D."/>
            <person name="Campbell D.S."/>
            <person name="Smith T.M."/>
            <person name="McCormick J.K."/>
            <person name="Leung D.Y.M."/>
            <person name="Schlievert P.M."/>
            <person name="Musser J.M."/>
        </authorList>
    </citation>
    <scope>NUCLEOTIDE SEQUENCE [LARGE SCALE GENOMIC DNA]</scope>
    <source>
        <strain>ATCC BAA-595 / MGAS315</strain>
    </source>
</reference>